<accession>Q91V79</accession>
<accession>Q80ZL0</accession>
<accession>Q8CI63</accession>
<accession>Q9CTD0</accession>
<name>FITM1_MOUSE</name>
<proteinExistence type="evidence at protein level"/>
<evidence type="ECO:0000255" key="1"/>
<evidence type="ECO:0000255" key="2">
    <source>
        <dbReference type="HAMAP-Rule" id="MF_03229"/>
    </source>
</evidence>
<evidence type="ECO:0000269" key="3">
    <source>
    </source>
</evidence>
<evidence type="ECO:0000269" key="4">
    <source>
    </source>
</evidence>
<evidence type="ECO:0000269" key="5">
    <source>
    </source>
</evidence>
<evidence type="ECO:0000303" key="6">
    <source>
    </source>
</evidence>
<evidence type="ECO:0000305" key="7"/>
<evidence type="ECO:0000312" key="8">
    <source>
        <dbReference type="MGI" id="MGI:1915930"/>
    </source>
</evidence>
<sequence length="292" mass="32280">MERGPTVGAGLGAGTRVRALLGCLVKVLLWVASALLYFGSEQAARLLGSPCLRRLYHAWLAAVVIFGPLLQFHVNSRTIFASHGNFFNIKFVNSAWGWTCTFLGGFVLLVVFLATRRVAVTARHLSRLVVGAAVWRGAGRAFLLIEDLTGSCFEPLPQGLLLHELPDRKSCLAAGHQWRGYTVSSHTFLLTFCCLLMAEEAAVFAKYLAHGLPAGAPLRLVFLLNVLLLGLWNFLLLCTVIYFHQYTHKVVGAAVGTFAWYLTYGSWYHQPWSPGIPGHGLFPRSRSMRKHN</sequence>
<keyword id="KW-0256">Endoplasmic reticulum</keyword>
<keyword id="KW-0443">Lipid metabolism</keyword>
<keyword id="KW-0472">Membrane</keyword>
<keyword id="KW-1185">Reference proteome</keyword>
<keyword id="KW-0812">Transmembrane</keyword>
<keyword id="KW-1133">Transmembrane helix</keyword>
<reference key="1">
    <citation type="journal article" date="2001" name="Immunogenetics">
        <title>Nucleotide sequence analysis of the ~35-kb segment containing interferon-gamma-inducible mouse proteasome activator genes.</title>
        <authorList>
            <person name="Yawata M."/>
            <person name="Murata S."/>
            <person name="Tanaka K."/>
            <person name="Ishigatsubo Y."/>
            <person name="Kasahara M."/>
        </authorList>
    </citation>
    <scope>NUCLEOTIDE SEQUENCE [GENOMIC DNA / MRNA]</scope>
    <source>
        <strain>129/SvJ</strain>
        <tissue>Lung</tissue>
    </source>
</reference>
<reference key="2">
    <citation type="journal article" date="2004" name="Genome Res.">
        <title>The status, quality, and expansion of the NIH full-length cDNA project: the Mammalian Gene Collection (MGC).</title>
        <authorList>
            <consortium name="The MGC Project Team"/>
        </authorList>
    </citation>
    <scope>NUCLEOTIDE SEQUENCE [LARGE SCALE MRNA]</scope>
    <source>
        <strain>Czech II</strain>
        <strain>FVB/N</strain>
        <tissue>Liver</tissue>
        <tissue>Mammary tumor</tissue>
    </source>
</reference>
<reference key="3">
    <citation type="journal article" date="2005" name="Science">
        <title>The transcriptional landscape of the mammalian genome.</title>
        <authorList>
            <person name="Carninci P."/>
            <person name="Kasukawa T."/>
            <person name="Katayama S."/>
            <person name="Gough J."/>
            <person name="Frith M.C."/>
            <person name="Maeda N."/>
            <person name="Oyama R."/>
            <person name="Ravasi T."/>
            <person name="Lenhard B."/>
            <person name="Wells C."/>
            <person name="Kodzius R."/>
            <person name="Shimokawa K."/>
            <person name="Bajic V.B."/>
            <person name="Brenner S.E."/>
            <person name="Batalov S."/>
            <person name="Forrest A.R."/>
            <person name="Zavolan M."/>
            <person name="Davis M.J."/>
            <person name="Wilming L.G."/>
            <person name="Aidinis V."/>
            <person name="Allen J.E."/>
            <person name="Ambesi-Impiombato A."/>
            <person name="Apweiler R."/>
            <person name="Aturaliya R.N."/>
            <person name="Bailey T.L."/>
            <person name="Bansal M."/>
            <person name="Baxter L."/>
            <person name="Beisel K.W."/>
            <person name="Bersano T."/>
            <person name="Bono H."/>
            <person name="Chalk A.M."/>
            <person name="Chiu K.P."/>
            <person name="Choudhary V."/>
            <person name="Christoffels A."/>
            <person name="Clutterbuck D.R."/>
            <person name="Crowe M.L."/>
            <person name="Dalla E."/>
            <person name="Dalrymple B.P."/>
            <person name="de Bono B."/>
            <person name="Della Gatta G."/>
            <person name="di Bernardo D."/>
            <person name="Down T."/>
            <person name="Engstrom P."/>
            <person name="Fagiolini M."/>
            <person name="Faulkner G."/>
            <person name="Fletcher C.F."/>
            <person name="Fukushima T."/>
            <person name="Furuno M."/>
            <person name="Futaki S."/>
            <person name="Gariboldi M."/>
            <person name="Georgii-Hemming P."/>
            <person name="Gingeras T.R."/>
            <person name="Gojobori T."/>
            <person name="Green R.E."/>
            <person name="Gustincich S."/>
            <person name="Harbers M."/>
            <person name="Hayashi Y."/>
            <person name="Hensch T.K."/>
            <person name="Hirokawa N."/>
            <person name="Hill D."/>
            <person name="Huminiecki L."/>
            <person name="Iacono M."/>
            <person name="Ikeo K."/>
            <person name="Iwama A."/>
            <person name="Ishikawa T."/>
            <person name="Jakt M."/>
            <person name="Kanapin A."/>
            <person name="Katoh M."/>
            <person name="Kawasawa Y."/>
            <person name="Kelso J."/>
            <person name="Kitamura H."/>
            <person name="Kitano H."/>
            <person name="Kollias G."/>
            <person name="Krishnan S.P."/>
            <person name="Kruger A."/>
            <person name="Kummerfeld S.K."/>
            <person name="Kurochkin I.V."/>
            <person name="Lareau L.F."/>
            <person name="Lazarevic D."/>
            <person name="Lipovich L."/>
            <person name="Liu J."/>
            <person name="Liuni S."/>
            <person name="McWilliam S."/>
            <person name="Madan Babu M."/>
            <person name="Madera M."/>
            <person name="Marchionni L."/>
            <person name="Matsuda H."/>
            <person name="Matsuzawa S."/>
            <person name="Miki H."/>
            <person name="Mignone F."/>
            <person name="Miyake S."/>
            <person name="Morris K."/>
            <person name="Mottagui-Tabar S."/>
            <person name="Mulder N."/>
            <person name="Nakano N."/>
            <person name="Nakauchi H."/>
            <person name="Ng P."/>
            <person name="Nilsson R."/>
            <person name="Nishiguchi S."/>
            <person name="Nishikawa S."/>
            <person name="Nori F."/>
            <person name="Ohara O."/>
            <person name="Okazaki Y."/>
            <person name="Orlando V."/>
            <person name="Pang K.C."/>
            <person name="Pavan W.J."/>
            <person name="Pavesi G."/>
            <person name="Pesole G."/>
            <person name="Petrovsky N."/>
            <person name="Piazza S."/>
            <person name="Reed J."/>
            <person name="Reid J.F."/>
            <person name="Ring B.Z."/>
            <person name="Ringwald M."/>
            <person name="Rost B."/>
            <person name="Ruan Y."/>
            <person name="Salzberg S.L."/>
            <person name="Sandelin A."/>
            <person name="Schneider C."/>
            <person name="Schoenbach C."/>
            <person name="Sekiguchi K."/>
            <person name="Semple C.A."/>
            <person name="Seno S."/>
            <person name="Sessa L."/>
            <person name="Sheng Y."/>
            <person name="Shibata Y."/>
            <person name="Shimada H."/>
            <person name="Shimada K."/>
            <person name="Silva D."/>
            <person name="Sinclair B."/>
            <person name="Sperling S."/>
            <person name="Stupka E."/>
            <person name="Sugiura K."/>
            <person name="Sultana R."/>
            <person name="Takenaka Y."/>
            <person name="Taki K."/>
            <person name="Tammoja K."/>
            <person name="Tan S.L."/>
            <person name="Tang S."/>
            <person name="Taylor M.S."/>
            <person name="Tegner J."/>
            <person name="Teichmann S.A."/>
            <person name="Ueda H.R."/>
            <person name="van Nimwegen E."/>
            <person name="Verardo R."/>
            <person name="Wei C.L."/>
            <person name="Yagi K."/>
            <person name="Yamanishi H."/>
            <person name="Zabarovsky E."/>
            <person name="Zhu S."/>
            <person name="Zimmer A."/>
            <person name="Hide W."/>
            <person name="Bult C."/>
            <person name="Grimmond S.M."/>
            <person name="Teasdale R.D."/>
            <person name="Liu E.T."/>
            <person name="Brusic V."/>
            <person name="Quackenbush J."/>
            <person name="Wahlestedt C."/>
            <person name="Mattick J.S."/>
            <person name="Hume D.A."/>
            <person name="Kai C."/>
            <person name="Sasaki D."/>
            <person name="Tomaru Y."/>
            <person name="Fukuda S."/>
            <person name="Kanamori-Katayama M."/>
            <person name="Suzuki M."/>
            <person name="Aoki J."/>
            <person name="Arakawa T."/>
            <person name="Iida J."/>
            <person name="Imamura K."/>
            <person name="Itoh M."/>
            <person name="Kato T."/>
            <person name="Kawaji H."/>
            <person name="Kawagashira N."/>
            <person name="Kawashima T."/>
            <person name="Kojima M."/>
            <person name="Kondo S."/>
            <person name="Konno H."/>
            <person name="Nakano K."/>
            <person name="Ninomiya N."/>
            <person name="Nishio T."/>
            <person name="Okada M."/>
            <person name="Plessy C."/>
            <person name="Shibata K."/>
            <person name="Shiraki T."/>
            <person name="Suzuki S."/>
            <person name="Tagami M."/>
            <person name="Waki K."/>
            <person name="Watahiki A."/>
            <person name="Okamura-Oho Y."/>
            <person name="Suzuki H."/>
            <person name="Kawai J."/>
            <person name="Hayashizaki Y."/>
        </authorList>
    </citation>
    <scope>NUCLEOTIDE SEQUENCE [LARGE SCALE MRNA]</scope>
    <source>
        <strain>C57BL/6J</strain>
    </source>
</reference>
<reference key="4">
    <citation type="journal article" date="2008" name="Proc. Natl. Acad. Sci. U.S.A.">
        <title>Evolutionarily conserved gene family important for fat storage.</title>
        <authorList>
            <person name="Kadereit B."/>
            <person name="Kumar P."/>
            <person name="Wang W.-J."/>
            <person name="Miranda D."/>
            <person name="Snapp E.L."/>
            <person name="Severina N."/>
            <person name="Torregroza I."/>
            <person name="Evans T."/>
            <person name="Silver D.L."/>
        </authorList>
    </citation>
    <scope>FUNCTION</scope>
    <scope>SUBCELLULAR LOCATION</scope>
    <scope>TISSUE SPECIFICITY</scope>
</reference>
<reference key="5">
    <citation type="journal article" date="2011" name="Proc. Natl. Acad. Sci. U.S.A.">
        <title>Direct binding of triglyceride to fat storage-inducing transmembrane proteins 1 and 2 is important for lipid droplet formation.</title>
        <authorList>
            <person name="Gross D.A."/>
            <person name="Zhan C."/>
            <person name="Silver D.L."/>
        </authorList>
    </citation>
    <scope>FUNCTION</scope>
    <scope>SUBCELLULAR LOCATION</scope>
</reference>
<reference key="6">
    <citation type="journal article" date="2019" name="Heliyon">
        <title>Mice lacking fat storage-inducing transmembrane protein 2 show improved profiles upon pressure overload-induced heart failure.</title>
        <authorList>
            <person name="Nishihama N."/>
            <person name="Nagayama T."/>
            <person name="Makino S."/>
            <person name="Koishi R."/>
        </authorList>
    </citation>
    <scope>DISRUPTION PHENOTYPE</scope>
</reference>
<reference key="7">
    <citation type="journal article" date="2010" name="Cell">
        <title>A tissue-specific atlas of mouse protein phosphorylation and expression.</title>
        <authorList>
            <person name="Huttlin E.L."/>
            <person name="Jedrychowski M.P."/>
            <person name="Elias J.E."/>
            <person name="Goswami T."/>
            <person name="Rad R."/>
            <person name="Beausoleil S.A."/>
            <person name="Villen J."/>
            <person name="Haas W."/>
            <person name="Sowa M.E."/>
            <person name="Gygi S.P."/>
        </authorList>
    </citation>
    <scope>IDENTIFICATION BY MASS SPECTROMETRY [LARGE SCALE ANALYSIS]</scope>
    <source>
        <tissue>Heart</tissue>
    </source>
</reference>
<organism>
    <name type="scientific">Mus musculus</name>
    <name type="common">Mouse</name>
    <dbReference type="NCBI Taxonomy" id="10090"/>
    <lineage>
        <taxon>Eukaryota</taxon>
        <taxon>Metazoa</taxon>
        <taxon>Chordata</taxon>
        <taxon>Craniata</taxon>
        <taxon>Vertebrata</taxon>
        <taxon>Euteleostomi</taxon>
        <taxon>Mammalia</taxon>
        <taxon>Eutheria</taxon>
        <taxon>Euarchontoglires</taxon>
        <taxon>Glires</taxon>
        <taxon>Rodentia</taxon>
        <taxon>Myomorpha</taxon>
        <taxon>Muroidea</taxon>
        <taxon>Muridae</taxon>
        <taxon>Murinae</taxon>
        <taxon>Mus</taxon>
        <taxon>Mus</taxon>
    </lineage>
</organism>
<feature type="chain" id="PRO_0000319576" description="Fat storage-inducing transmembrane protein 1">
    <location>
        <begin position="1"/>
        <end position="292"/>
    </location>
</feature>
<feature type="topological domain" description="Lumenal" evidence="7">
    <location>
        <begin position="1"/>
        <end position="18"/>
    </location>
</feature>
<feature type="transmembrane region" description="Helical" evidence="1">
    <location>
        <begin position="19"/>
        <end position="39"/>
    </location>
</feature>
<feature type="topological domain" description="Cytoplasmic" evidence="7">
    <location>
        <begin position="40"/>
        <end position="54"/>
    </location>
</feature>
<feature type="transmembrane region" description="Helical" evidence="1">
    <location>
        <begin position="55"/>
        <end position="75"/>
    </location>
</feature>
<feature type="topological domain" description="Lumenal" evidence="7">
    <location>
        <begin position="76"/>
        <end position="94"/>
    </location>
</feature>
<feature type="transmembrane region" description="Helical" evidence="1">
    <location>
        <begin position="95"/>
        <end position="115"/>
    </location>
</feature>
<feature type="topological domain" description="Cytoplasmic" evidence="7">
    <location>
        <begin position="116"/>
        <end position="141"/>
    </location>
</feature>
<feature type="transmembrane region" description="Helical" evidence="1">
    <location>
        <begin position="142"/>
        <end position="162"/>
    </location>
</feature>
<feature type="topological domain" description="Lumenal" evidence="7">
    <location>
        <begin position="163"/>
        <end position="187"/>
    </location>
</feature>
<feature type="transmembrane region" description="Helical" evidence="1">
    <location>
        <begin position="188"/>
        <end position="208"/>
    </location>
</feature>
<feature type="topological domain" description="Cytoplasmic" evidence="7">
    <location>
        <begin position="209"/>
        <end position="220"/>
    </location>
</feature>
<feature type="transmembrane region" description="Helical" evidence="1">
    <location>
        <begin position="221"/>
        <end position="241"/>
    </location>
</feature>
<feature type="topological domain" description="Lumenal" evidence="7">
    <location>
        <begin position="242"/>
        <end position="249"/>
    </location>
</feature>
<feature type="transmembrane region" description="Helical" evidence="1">
    <location>
        <begin position="250"/>
        <end position="270"/>
    </location>
</feature>
<feature type="topological domain" description="Cytoplasmic" evidence="7">
    <location>
        <begin position="271"/>
        <end position="292"/>
    </location>
</feature>
<feature type="active site" evidence="2">
    <location>
        <position position="186"/>
    </location>
</feature>
<feature type="active site" evidence="2">
    <location>
        <position position="244"/>
    </location>
</feature>
<feature type="site" description="Important for catalytic activity" evidence="2">
    <location>
        <position position="248"/>
    </location>
</feature>
<protein>
    <recommendedName>
        <fullName evidence="2 6">Fat storage-inducing transmembrane protein 1</fullName>
    </recommendedName>
    <alternativeName>
        <fullName evidence="2">Fat-inducing protein 1</fullName>
    </alternativeName>
</protein>
<gene>
    <name evidence="2 8" type="primary">Fitm1</name>
    <name evidence="2" type="synonym">Fit1</name>
</gene>
<dbReference type="EMBL" id="AB053120">
    <property type="protein sequence ID" value="BAB47402.1"/>
    <property type="molecule type" value="Genomic_DNA"/>
</dbReference>
<dbReference type="EMBL" id="AB054000">
    <property type="protein sequence ID" value="BAB47400.1"/>
    <property type="molecule type" value="mRNA"/>
</dbReference>
<dbReference type="EMBL" id="BC037188">
    <property type="protein sequence ID" value="AAH37188.1"/>
    <property type="status" value="ALT_INIT"/>
    <property type="molecule type" value="mRNA"/>
</dbReference>
<dbReference type="EMBL" id="BC048823">
    <property type="protein sequence ID" value="AAH48823.1"/>
    <property type="molecule type" value="mRNA"/>
</dbReference>
<dbReference type="EMBL" id="BC104408">
    <property type="protein sequence ID" value="AAI04409.1"/>
    <property type="molecule type" value="mRNA"/>
</dbReference>
<dbReference type="EMBL" id="BC104409">
    <property type="protein sequence ID" value="AAI04410.1"/>
    <property type="molecule type" value="mRNA"/>
</dbReference>
<dbReference type="EMBL" id="AK003939">
    <property type="protein sequence ID" value="BAB23085.1"/>
    <property type="molecule type" value="mRNA"/>
</dbReference>
<dbReference type="CCDS" id="CCDS27116.1"/>
<dbReference type="RefSeq" id="NP_081084.1">
    <property type="nucleotide sequence ID" value="NM_026808.1"/>
</dbReference>
<dbReference type="FunCoup" id="Q91V79">
    <property type="interactions" value="174"/>
</dbReference>
<dbReference type="IntAct" id="Q91V79">
    <property type="interactions" value="1"/>
</dbReference>
<dbReference type="STRING" id="10090.ENSMUSP00000022826"/>
<dbReference type="GlyGen" id="Q91V79">
    <property type="glycosylation" value="2 sites"/>
</dbReference>
<dbReference type="iPTMnet" id="Q91V79"/>
<dbReference type="PhosphoSitePlus" id="Q91V79"/>
<dbReference type="jPOST" id="Q91V79"/>
<dbReference type="PaxDb" id="10090-ENSMUSP00000022826"/>
<dbReference type="ProteomicsDB" id="266850"/>
<dbReference type="Antibodypedia" id="8923">
    <property type="antibodies" value="35 antibodies from 14 providers"/>
</dbReference>
<dbReference type="DNASU" id="68680"/>
<dbReference type="Ensembl" id="ENSMUST00000022826.7">
    <property type="protein sequence ID" value="ENSMUSP00000022826.6"/>
    <property type="gene ID" value="ENSMUSG00000022215.7"/>
</dbReference>
<dbReference type="GeneID" id="68680"/>
<dbReference type="KEGG" id="mmu:68680"/>
<dbReference type="UCSC" id="uc007tzc.1">
    <property type="organism name" value="mouse"/>
</dbReference>
<dbReference type="AGR" id="MGI:1915930"/>
<dbReference type="CTD" id="161247"/>
<dbReference type="MGI" id="MGI:1915930">
    <property type="gene designation" value="Fitm1"/>
</dbReference>
<dbReference type="VEuPathDB" id="HostDB:ENSMUSG00000022215"/>
<dbReference type="eggNOG" id="KOG3750">
    <property type="taxonomic scope" value="Eukaryota"/>
</dbReference>
<dbReference type="GeneTree" id="ENSGT00530000063693"/>
<dbReference type="HOGENOM" id="CLU_049499_2_0_1"/>
<dbReference type="InParanoid" id="Q91V79"/>
<dbReference type="OMA" id="AIFANHH"/>
<dbReference type="OrthoDB" id="5579088at2759"/>
<dbReference type="PhylomeDB" id="Q91V79"/>
<dbReference type="Reactome" id="R-MMU-8964572">
    <property type="pathway name" value="Lipid particle organization"/>
</dbReference>
<dbReference type="BioGRID-ORCS" id="68680">
    <property type="hits" value="2 hits in 79 CRISPR screens"/>
</dbReference>
<dbReference type="ChiTaRS" id="Picalm">
    <property type="organism name" value="mouse"/>
</dbReference>
<dbReference type="PRO" id="PR:Q91V79"/>
<dbReference type="Proteomes" id="UP000000589">
    <property type="component" value="Chromosome 14"/>
</dbReference>
<dbReference type="RNAct" id="Q91V79">
    <property type="molecule type" value="protein"/>
</dbReference>
<dbReference type="Bgee" id="ENSMUSG00000022215">
    <property type="expression patterns" value="Expressed in hindlimb stylopod muscle and 82 other cell types or tissues"/>
</dbReference>
<dbReference type="GO" id="GO:0005789">
    <property type="term" value="C:endoplasmic reticulum membrane"/>
    <property type="evidence" value="ECO:0000314"/>
    <property type="project" value="UniProtKB"/>
</dbReference>
<dbReference type="GO" id="GO:0010945">
    <property type="term" value="F:coenzyme A diphosphatase activity"/>
    <property type="evidence" value="ECO:0007669"/>
    <property type="project" value="InterPro"/>
</dbReference>
<dbReference type="GO" id="GO:0019992">
    <property type="term" value="F:diacylglycerol binding"/>
    <property type="evidence" value="ECO:0000314"/>
    <property type="project" value="UniProtKB"/>
</dbReference>
<dbReference type="GO" id="GO:0017129">
    <property type="term" value="F:triglyceride binding"/>
    <property type="evidence" value="ECO:0000314"/>
    <property type="project" value="UniProtKB"/>
</dbReference>
<dbReference type="GO" id="GO:0045444">
    <property type="term" value="P:fat cell differentiation"/>
    <property type="evidence" value="ECO:0000314"/>
    <property type="project" value="BHF-UCL"/>
</dbReference>
<dbReference type="GO" id="GO:0140042">
    <property type="term" value="P:lipid droplet formation"/>
    <property type="evidence" value="ECO:0000314"/>
    <property type="project" value="UniProtKB"/>
</dbReference>
<dbReference type="GO" id="GO:0034389">
    <property type="term" value="P:lipid droplet organization"/>
    <property type="evidence" value="ECO:0000314"/>
    <property type="project" value="BHF-UCL"/>
</dbReference>
<dbReference type="GO" id="GO:0008654">
    <property type="term" value="P:phospholipid biosynthetic process"/>
    <property type="evidence" value="ECO:0007669"/>
    <property type="project" value="InterPro"/>
</dbReference>
<dbReference type="HAMAP" id="MF_03229">
    <property type="entry name" value="FITM1"/>
    <property type="match status" value="1"/>
</dbReference>
<dbReference type="HAMAP" id="MF_03230">
    <property type="entry name" value="FITM2"/>
    <property type="match status" value="1"/>
</dbReference>
<dbReference type="InterPro" id="IPR019388">
    <property type="entry name" value="FIT"/>
</dbReference>
<dbReference type="InterPro" id="IPR046402">
    <property type="entry name" value="FIT1"/>
</dbReference>
<dbReference type="InterPro" id="IPR046401">
    <property type="entry name" value="FITM1/2"/>
</dbReference>
<dbReference type="PANTHER" id="PTHR23129">
    <property type="entry name" value="ACYL-COENZYME A DIPHOSPHATASE FITM2"/>
    <property type="match status" value="1"/>
</dbReference>
<dbReference type="PANTHER" id="PTHR23129:SF3">
    <property type="entry name" value="FAT STORAGE-INDUCING TRANSMEMBRANE PROTEIN 1"/>
    <property type="match status" value="1"/>
</dbReference>
<comment type="function">
    <text evidence="2 3 4">Plays an important role in the formation of lipid droplets (LDs) which are storage organelles at the center of lipid and energy homeostasis (By similarity) (PubMed:18160536, PubMed:22106267). Directly binds to diacylglycerol (DAGs) and triacylglycerol (By similarity) (PubMed:22106267).</text>
</comment>
<comment type="subcellular location">
    <subcellularLocation>
        <location evidence="2 3 4">Endoplasmic reticulum membrane</location>
        <topology evidence="2">Multi-pass membrane protein</topology>
    </subcellularLocation>
</comment>
<comment type="tissue specificity">
    <text evidence="3">Predominantly expressed in skeletal muscle and at lower levels in the heart (at protein level). In the heart, mRNA expression levels do not correlate well with protein levels, suggesting post-transcriptional regulation in this organ.</text>
</comment>
<comment type="disruption phenotype">
    <text evidence="5">Knockout mice show no significant differences in heart size or function.</text>
</comment>
<comment type="similarity">
    <text evidence="2">Belongs to the FIT family. FIT1 subfamily.</text>
</comment>
<comment type="sequence caution" evidence="7">
    <conflict type="erroneous initiation">
        <sequence resource="EMBL-CDS" id="AAH37188"/>
    </conflict>
</comment>